<evidence type="ECO:0000250" key="1">
    <source>
        <dbReference type="UniProtKB" id="E7F187"/>
    </source>
</evidence>
<evidence type="ECO:0000250" key="2">
    <source>
        <dbReference type="UniProtKB" id="Q7Z3E5"/>
    </source>
</evidence>
<evidence type="ECO:0000250" key="3">
    <source>
        <dbReference type="UniProtKB" id="Q9D2I5"/>
    </source>
</evidence>
<evidence type="ECO:0000255" key="4"/>
<evidence type="ECO:0000255" key="5">
    <source>
        <dbReference type="PROSITE-ProRule" id="PRU00126"/>
    </source>
</evidence>
<evidence type="ECO:0000256" key="6">
    <source>
        <dbReference type="SAM" id="MobiDB-lite"/>
    </source>
</evidence>
<protein>
    <recommendedName>
        <fullName>LisH domain-containing protein ARMC9</fullName>
    </recommendedName>
</protein>
<comment type="function">
    <text evidence="1 2 3">Involved in ciliogenesis. It is required for appropriate acetylation and polyglutamylation of ciliary microtubules, and regulation of cilium length (By similarity). Acts as a positive regulator of hedgehog (Hh)signaling (By similarity). May participate in the trafficking and/or retention of GLI2 and GLI3 proteins at the ciliary tip (By similarity).</text>
</comment>
<comment type="subunit">
    <text evidence="2">Interacts with TOGARAM1, CCDC66, CEP104, CSPP1 and CEP290. Interacts with NDUFAF2 (By similarity).</text>
</comment>
<comment type="subcellular location">
    <subcellularLocation>
        <location evidence="2">Cytoplasm</location>
        <location evidence="2">Cytoskeleton</location>
        <location evidence="2">Cilium basal body</location>
    </subcellularLocation>
    <subcellularLocation>
        <location evidence="3">Cell projection</location>
        <location evidence="3">Cilium</location>
    </subcellularLocation>
    <subcellularLocation>
        <location evidence="2">Cytoplasm</location>
        <location evidence="2">Cytoskeleton</location>
        <location evidence="2">Microtubule organizing center</location>
        <location evidence="2">Centrosome</location>
        <location evidence="2">Centriole</location>
    </subcellularLocation>
    <text evidence="2 3">Localized to the proximal region in cilia. Stimulation of Hh signaling leads to redistribution of ARMC9 toward the ciliary tip within 6 hours, follow by a gradual return to its original proximal location (By similarity). Localizes to the daughter centriole of the primary cilium in RPE1 cells (By similarity).</text>
</comment>
<proteinExistence type="evidence at transcript level"/>
<accession>A1A5P5</accession>
<name>ARMC9_RAT</name>
<dbReference type="EMBL" id="BC128749">
    <property type="protein sequence ID" value="AAI28750.1"/>
    <property type="molecule type" value="mRNA"/>
</dbReference>
<dbReference type="SMR" id="A1A5P5"/>
<dbReference type="FunCoup" id="A1A5P5">
    <property type="interactions" value="1244"/>
</dbReference>
<dbReference type="STRING" id="10116.ENSRNOP00000059344"/>
<dbReference type="GlyGen" id="A1A5P5">
    <property type="glycosylation" value="1 site"/>
</dbReference>
<dbReference type="PhosphoSitePlus" id="A1A5P5"/>
<dbReference type="PaxDb" id="10116-ENSRNOP00000059344"/>
<dbReference type="UCSC" id="RGD:1305615">
    <property type="organism name" value="rat"/>
</dbReference>
<dbReference type="AGR" id="RGD:1305615"/>
<dbReference type="RGD" id="1305615">
    <property type="gene designation" value="Armc9"/>
</dbReference>
<dbReference type="eggNOG" id="ENOG502QQ9W">
    <property type="taxonomic scope" value="Eukaryota"/>
</dbReference>
<dbReference type="InParanoid" id="A1A5P5"/>
<dbReference type="PhylomeDB" id="A1A5P5"/>
<dbReference type="PRO" id="PR:A1A5P5"/>
<dbReference type="Proteomes" id="UP000002494">
    <property type="component" value="Unplaced"/>
</dbReference>
<dbReference type="GO" id="GO:0005814">
    <property type="term" value="C:centriole"/>
    <property type="evidence" value="ECO:0000250"/>
    <property type="project" value="UniProtKB"/>
</dbReference>
<dbReference type="GO" id="GO:0036064">
    <property type="term" value="C:ciliary basal body"/>
    <property type="evidence" value="ECO:0000250"/>
    <property type="project" value="UniProtKB"/>
</dbReference>
<dbReference type="GO" id="GO:0097542">
    <property type="term" value="C:ciliary tip"/>
    <property type="evidence" value="ECO:0000250"/>
    <property type="project" value="UniProtKB"/>
</dbReference>
<dbReference type="GO" id="GO:0005929">
    <property type="term" value="C:cilium"/>
    <property type="evidence" value="ECO:0000250"/>
    <property type="project" value="UniProtKB"/>
</dbReference>
<dbReference type="GO" id="GO:0005737">
    <property type="term" value="C:cytoplasm"/>
    <property type="evidence" value="ECO:0007669"/>
    <property type="project" value="UniProtKB-KW"/>
</dbReference>
<dbReference type="GO" id="GO:0060271">
    <property type="term" value="P:cilium assembly"/>
    <property type="evidence" value="ECO:0000250"/>
    <property type="project" value="UniProtKB"/>
</dbReference>
<dbReference type="GO" id="GO:0045880">
    <property type="term" value="P:positive regulation of smoothened signaling pathway"/>
    <property type="evidence" value="ECO:0000250"/>
    <property type="project" value="UniProtKB"/>
</dbReference>
<dbReference type="FunFam" id="1.25.10.10:FF:000124">
    <property type="entry name" value="lisH domain-containing protein ARMC9 isoform X1"/>
    <property type="match status" value="1"/>
</dbReference>
<dbReference type="Gene3D" id="1.25.10.10">
    <property type="entry name" value="Leucine-rich Repeat Variant"/>
    <property type="match status" value="1"/>
</dbReference>
<dbReference type="InterPro" id="IPR011989">
    <property type="entry name" value="ARM-like"/>
</dbReference>
<dbReference type="InterPro" id="IPR016024">
    <property type="entry name" value="ARM-type_fold"/>
</dbReference>
<dbReference type="InterPro" id="IPR040369">
    <property type="entry name" value="ARMC9"/>
</dbReference>
<dbReference type="InterPro" id="IPR048959">
    <property type="entry name" value="ARMC9_ARM_dom"/>
</dbReference>
<dbReference type="InterPro" id="IPR056327">
    <property type="entry name" value="ARMC9_CTLH-like_dom"/>
</dbReference>
<dbReference type="InterPro" id="IPR048957">
    <property type="entry name" value="ARMC9_LisH"/>
</dbReference>
<dbReference type="InterPro" id="IPR006594">
    <property type="entry name" value="LisH"/>
</dbReference>
<dbReference type="PANTHER" id="PTHR14881">
    <property type="entry name" value="LISH DOMAIN-CONTAINING PROTEIN ARMC9"/>
    <property type="match status" value="1"/>
</dbReference>
<dbReference type="PANTHER" id="PTHR14881:SF4">
    <property type="entry name" value="LISH DOMAIN-CONTAINING PROTEIN ARMC9"/>
    <property type="match status" value="1"/>
</dbReference>
<dbReference type="Pfam" id="PF21050">
    <property type="entry name" value="ARMC9_ARM"/>
    <property type="match status" value="1"/>
</dbReference>
<dbReference type="Pfam" id="PF21051">
    <property type="entry name" value="ARMC9_LisH"/>
    <property type="match status" value="1"/>
</dbReference>
<dbReference type="Pfam" id="PF23138">
    <property type="entry name" value="CTLH_Armc9"/>
    <property type="match status" value="1"/>
</dbReference>
<dbReference type="SMART" id="SM00667">
    <property type="entry name" value="LisH"/>
    <property type="match status" value="1"/>
</dbReference>
<dbReference type="SUPFAM" id="SSF48371">
    <property type="entry name" value="ARM repeat"/>
    <property type="match status" value="1"/>
</dbReference>
<dbReference type="PROSITE" id="PS50896">
    <property type="entry name" value="LISH"/>
    <property type="match status" value="1"/>
</dbReference>
<feature type="chain" id="PRO_0000280598" description="LisH domain-containing protein ARMC9">
    <location>
        <begin position="1"/>
        <end position="730"/>
    </location>
</feature>
<feature type="domain" description="LisH" evidence="5">
    <location>
        <begin position="7"/>
        <end position="39"/>
    </location>
</feature>
<feature type="region of interest" description="Disordered" evidence="6">
    <location>
        <begin position="675"/>
        <end position="730"/>
    </location>
</feature>
<feature type="coiled-coil region" evidence="4">
    <location>
        <begin position="205"/>
        <end position="242"/>
    </location>
</feature>
<feature type="modified residue" description="Phosphoserine" evidence="2">
    <location>
        <position position="583"/>
    </location>
</feature>
<keyword id="KW-0966">Cell projection</keyword>
<keyword id="KW-0970">Cilium biogenesis/degradation</keyword>
<keyword id="KW-0175">Coiled coil</keyword>
<keyword id="KW-0963">Cytoplasm</keyword>
<keyword id="KW-0206">Cytoskeleton</keyword>
<keyword id="KW-0597">Phosphoprotein</keyword>
<keyword id="KW-1185">Reference proteome</keyword>
<organism>
    <name type="scientific">Rattus norvegicus</name>
    <name type="common">Rat</name>
    <dbReference type="NCBI Taxonomy" id="10116"/>
    <lineage>
        <taxon>Eukaryota</taxon>
        <taxon>Metazoa</taxon>
        <taxon>Chordata</taxon>
        <taxon>Craniata</taxon>
        <taxon>Vertebrata</taxon>
        <taxon>Euteleostomi</taxon>
        <taxon>Mammalia</taxon>
        <taxon>Eutheria</taxon>
        <taxon>Euarchontoglires</taxon>
        <taxon>Glires</taxon>
        <taxon>Rodentia</taxon>
        <taxon>Myomorpha</taxon>
        <taxon>Muroidea</taxon>
        <taxon>Muridae</taxon>
        <taxon>Murinae</taxon>
        <taxon>Rattus</taxon>
    </lineage>
</organism>
<reference key="1">
    <citation type="journal article" date="2004" name="Genome Res.">
        <title>The status, quality, and expansion of the NIH full-length cDNA project: the Mammalian Gene Collection (MGC).</title>
        <authorList>
            <consortium name="The MGC Project Team"/>
        </authorList>
    </citation>
    <scope>NUCLEOTIDE SEQUENCE [LARGE SCALE MRNA]</scope>
    <source>
        <tissue>Lung</tissue>
    </source>
</reference>
<sequence length="730" mass="82337">MGDVLAHESELLGLVKEYLDFAEFEDTLKTFSKECKVKGKPLCKTVGGSLKKDSNSLMIQKDLVAAFDSGDQKLFFDLWEGHIPSSIRDTDSLAQKLEFYLHIHFAIYLLKYSGGRPDRQELDERISYFKTYLETKGASLSQTTEFLPFYALPFVPNPMVHPSFKELFQDSWTPELKLKLEKFLALIFKASNTPKLLTIYKENGSNNKEMLQQLHQQLLEAERRAMAYLKRYNKMQADYHSLIGVTAELVDSLEATVSGKMITPEYLQSVCVRLFSNQMRQSLAHSVDFTRPGTASTMLRASLAPEKLKDVPLLPSLDYEKLKKDLIWGSDRLKAFLLQALRWRLTTSHPGEQRETVLQAYISNDLLDCHSHNQRSVLQLLHSKSEAVRQYMARLVNALASLAEGRLYLAQNTKVLRMLEGRLKEEDKDVITRENVLGALQKFSLRRPLQTAMIRDGLIFWLIDLLKEPDCLSDYTLEYSVALLMNLCLRSAGKNMCAKVAGLMLKVLSDLLGHENHEIQPYVNGALYSILSIPSIREEARAMGMEDILRCFIKEGNAEMIRQIEFIIKQLNSEDLLDGVLESDDDEDEDDEEDHDIMEADLDKDELIQPQLGELSGEKLLTTEYLGIMTNTGKARRKGLASVQWSGDEPLRRPVTPGGHRTGCPVVGDHLISSQNAQQARNGCPRPIPVAQPDDYKEGKRGVAGRATPSSCKSAECAEPVLSSGAQKPK</sequence>
<gene>
    <name type="primary">Armc9</name>
</gene>